<feature type="peptide" id="PRO_0000043918" description="Glucagon">
    <location>
        <begin position="1"/>
        <end position="29"/>
    </location>
</feature>
<feature type="modified residue" description="Phosphoserine" evidence="1">
    <location>
        <position position="2"/>
    </location>
</feature>
<accession>P18108</accession>
<keyword id="KW-0903">Direct protein sequencing</keyword>
<keyword id="KW-0372">Hormone</keyword>
<keyword id="KW-0597">Phosphoprotein</keyword>
<keyword id="KW-0964">Secreted</keyword>
<dbReference type="PIR" id="JQ0364">
    <property type="entry name" value="GCOPV"/>
</dbReference>
<dbReference type="SMR" id="P18108"/>
<dbReference type="GO" id="GO:0005615">
    <property type="term" value="C:extracellular space"/>
    <property type="evidence" value="ECO:0007669"/>
    <property type="project" value="TreeGrafter"/>
</dbReference>
<dbReference type="GO" id="GO:0031769">
    <property type="term" value="F:glucagon receptor binding"/>
    <property type="evidence" value="ECO:0007669"/>
    <property type="project" value="TreeGrafter"/>
</dbReference>
<dbReference type="GO" id="GO:0005179">
    <property type="term" value="F:hormone activity"/>
    <property type="evidence" value="ECO:0007669"/>
    <property type="project" value="UniProtKB-KW"/>
</dbReference>
<dbReference type="GO" id="GO:0007188">
    <property type="term" value="P:adenylate cyclase-modulating G protein-coupled receptor signaling pathway"/>
    <property type="evidence" value="ECO:0007669"/>
    <property type="project" value="TreeGrafter"/>
</dbReference>
<dbReference type="GO" id="GO:0043066">
    <property type="term" value="P:negative regulation of apoptotic process"/>
    <property type="evidence" value="ECO:0007669"/>
    <property type="project" value="TreeGrafter"/>
</dbReference>
<dbReference type="GO" id="GO:0035774">
    <property type="term" value="P:positive regulation of insulin secretion involved in cellular response to glucose stimulus"/>
    <property type="evidence" value="ECO:0007669"/>
    <property type="project" value="TreeGrafter"/>
</dbReference>
<dbReference type="GO" id="GO:0010737">
    <property type="term" value="P:protein kinase A signaling"/>
    <property type="evidence" value="ECO:0007669"/>
    <property type="project" value="TreeGrafter"/>
</dbReference>
<dbReference type="Gene3D" id="6.10.250.590">
    <property type="match status" value="1"/>
</dbReference>
<dbReference type="InterPro" id="IPR015550">
    <property type="entry name" value="Glucagon"/>
</dbReference>
<dbReference type="InterPro" id="IPR000532">
    <property type="entry name" value="Glucagon_GIP_secretin_VIP"/>
</dbReference>
<dbReference type="PANTHER" id="PTHR11418">
    <property type="entry name" value="GLUCAGON"/>
    <property type="match status" value="1"/>
</dbReference>
<dbReference type="PANTHER" id="PTHR11418:SF0">
    <property type="entry name" value="PRO-GLUCAGON"/>
    <property type="match status" value="1"/>
</dbReference>
<dbReference type="Pfam" id="PF00123">
    <property type="entry name" value="Hormone_2"/>
    <property type="match status" value="1"/>
</dbReference>
<dbReference type="PRINTS" id="PR00275">
    <property type="entry name" value="GLUCAGON"/>
</dbReference>
<dbReference type="SMART" id="SM00070">
    <property type="entry name" value="GLUCA"/>
    <property type="match status" value="1"/>
</dbReference>
<dbReference type="PROSITE" id="PS00260">
    <property type="entry name" value="GLUCAGON"/>
    <property type="match status" value="1"/>
</dbReference>
<organism>
    <name type="scientific">Didelphis virginiana</name>
    <name type="common">North American opossum</name>
    <name type="synonym">Didelphis marsupialis virginiana</name>
    <dbReference type="NCBI Taxonomy" id="9267"/>
    <lineage>
        <taxon>Eukaryota</taxon>
        <taxon>Metazoa</taxon>
        <taxon>Chordata</taxon>
        <taxon>Craniata</taxon>
        <taxon>Vertebrata</taxon>
        <taxon>Euteleostomi</taxon>
        <taxon>Mammalia</taxon>
        <taxon>Metatheria</taxon>
        <taxon>Didelphimorphia</taxon>
        <taxon>Didelphidae</taxon>
        <taxon>Didelphis</taxon>
    </lineage>
</organism>
<reference key="1">
    <citation type="journal article" date="1989" name="Peptides">
        <title>Opossum insulin, glucagon and pancreatic polypeptide: amino acid sequences.</title>
        <authorList>
            <person name="Yu J.-H."/>
            <person name="Eng J."/>
            <person name="Rattan S."/>
            <person name="Yalow R.S."/>
        </authorList>
    </citation>
    <scope>PROTEIN SEQUENCE</scope>
    <source>
        <tissue>Pancreas</tissue>
    </source>
</reference>
<protein>
    <recommendedName>
        <fullName>Glucagon</fullName>
    </recommendedName>
</protein>
<gene>
    <name type="primary">GCG</name>
</gene>
<evidence type="ECO:0000250" key="1">
    <source>
        <dbReference type="UniProtKB" id="P55095"/>
    </source>
</evidence>
<evidence type="ECO:0000305" key="2"/>
<name>GLUC_DIDVI</name>
<comment type="function">
    <text>Glucagon plays a key role in glucose metabolism and homeostasis. Regulates blood glucose by increasing gluconeogenesis and decreasing glycolysis.</text>
</comment>
<comment type="subcellular location">
    <subcellularLocation>
        <location>Secreted</location>
    </subcellularLocation>
</comment>
<comment type="induction">
    <text>Produced in the A cells of the islets of Langerhans in response to a drop in blood sugar concentration.</text>
</comment>
<comment type="similarity">
    <text evidence="2">Belongs to the glucagon family.</text>
</comment>
<proteinExistence type="evidence at protein level"/>
<sequence>HSQGTFTSDYSKYLDSRRAQDFVQWLMST</sequence>